<sequence>MNASSRNVFDTLIRVLTESMFKHLRKWVVTRFFGHSRQRARLVSKDGRCNIEFGNVEAQSRFIFFVDIWTTVLDLKWRYKMTIFITAFLGSWFFFGLLWYAVAYIHKDLPEFHPSANHTPCVENINGLTSAFLFSLETQVTIGYGFRCVTEQCATAIFLLIFQSILGVIINSFMCGAILAKISRPKKRAKTITFSKNAVISKRGGKLCLLIRVANLRKSLLIGSHIYGKLLKTTVTPEGETIILDQININFVVDAGNENLFFISPLTIYHVIDHNSPFFHMAAETLLQQDFELVVFLDGTVESTSATCQVRTSYVPEEVLWGYRFAPIVSKTKEGKYRVDFHNFSKTVEVETPHCAMCLYNEKDVRARMKRGYDNPNFILSEVNETDDTKM</sequence>
<keyword id="KW-0025">Alternative splicing</keyword>
<keyword id="KW-0067">ATP-binding</keyword>
<keyword id="KW-0910">Bartter syndrome</keyword>
<keyword id="KW-1003">Cell membrane</keyword>
<keyword id="KW-0225">Disease variant</keyword>
<keyword id="KW-0325">Glycoprotein</keyword>
<keyword id="KW-0407">Ion channel</keyword>
<keyword id="KW-0406">Ion transport</keyword>
<keyword id="KW-0472">Membrane</keyword>
<keyword id="KW-0547">Nucleotide-binding</keyword>
<keyword id="KW-0597">Phosphoprotein</keyword>
<keyword id="KW-0630">Potassium</keyword>
<keyword id="KW-0633">Potassium transport</keyword>
<keyword id="KW-1267">Proteomics identification</keyword>
<keyword id="KW-1185">Reference proteome</keyword>
<keyword id="KW-0812">Transmembrane</keyword>
<keyword id="KW-1133">Transmembrane helix</keyword>
<keyword id="KW-0813">Transport</keyword>
<keyword id="KW-0851">Voltage-gated channel</keyword>
<reference key="1">
    <citation type="journal article" date="1994" name="J. Biol. Chem.">
        <title>Cloning and characterization of multiple forms of the human kidney ROM-K potassium channel.</title>
        <authorList>
            <person name="Shuck M.E."/>
            <person name="Bock J.H."/>
            <person name="Benjamin C.W."/>
            <person name="Tsai T.-D."/>
            <person name="Lee K.S."/>
            <person name="Slightom J.L."/>
            <person name="Bienkowski M.J."/>
        </authorList>
    </citation>
    <scope>NUCLEOTIDE SEQUENCE [MRNA]</scope>
    <scope>FUNCTION</scope>
    <scope>ALTERNATIVE SPLICING</scope>
    <scope>TRANSPORTER ACTIVITY</scope>
    <source>
        <tissue>Kidney</tissue>
    </source>
</reference>
<reference key="2">
    <citation type="journal article" date="1994" name="Mol. Pharmacol.">
        <title>Alternative splicing of human inwardly rectifying K+ channel ROMK1 mRNA.</title>
        <authorList>
            <person name="Yano H."/>
            <person name="Philipson L.H."/>
            <person name="Kugler J.L."/>
            <person name="Tokuyama Y."/>
            <person name="Davis E.M."/>
            <person name="le Beau M.M."/>
            <person name="Nelson D.J."/>
            <person name="Bell G.I."/>
            <person name="Takeda J."/>
        </authorList>
    </citation>
    <scope>NUCLEOTIDE SEQUENCE [MRNA]</scope>
    <scope>ALTERNATIVE SPLICING</scope>
    <source>
        <tissue>Kidney</tissue>
    </source>
</reference>
<reference key="3">
    <citation type="journal article" date="1997" name="Gene">
        <title>Nucleotide sequence analysis of the human KCNJ1 potassium channel locus.</title>
        <authorList>
            <person name="Bock J.H."/>
            <person name="Shuck M.E."/>
            <person name="Benjamin C.W."/>
            <person name="Chee M."/>
            <person name="Bienkowski M.J."/>
            <person name="Slightom J.L."/>
        </authorList>
    </citation>
    <scope>NUCLEOTIDE SEQUENCE [GENOMIC DNA]</scope>
    <scope>ALTERNATIVE SPLICING</scope>
</reference>
<reference key="4">
    <citation type="submission" date="2005-07" db="EMBL/GenBank/DDBJ databases">
        <authorList>
            <person name="Mural R.J."/>
            <person name="Istrail S."/>
            <person name="Sutton G.G."/>
            <person name="Florea L."/>
            <person name="Halpern A.L."/>
            <person name="Mobarry C.M."/>
            <person name="Lippert R."/>
            <person name="Walenz B."/>
            <person name="Shatkay H."/>
            <person name="Dew I."/>
            <person name="Miller J.R."/>
            <person name="Flanigan M.J."/>
            <person name="Edwards N.J."/>
            <person name="Bolanos R."/>
            <person name="Fasulo D."/>
            <person name="Halldorsson B.V."/>
            <person name="Hannenhalli S."/>
            <person name="Turner R."/>
            <person name="Yooseph S."/>
            <person name="Lu F."/>
            <person name="Nusskern D.R."/>
            <person name="Shue B.C."/>
            <person name="Zheng X.H."/>
            <person name="Zhong F."/>
            <person name="Delcher A.L."/>
            <person name="Huson D.H."/>
            <person name="Kravitz S.A."/>
            <person name="Mouchard L."/>
            <person name="Reinert K."/>
            <person name="Remington K.A."/>
            <person name="Clark A.G."/>
            <person name="Waterman M.S."/>
            <person name="Eichler E.E."/>
            <person name="Adams M.D."/>
            <person name="Hunkapiller M.W."/>
            <person name="Myers E.W."/>
            <person name="Venter J.C."/>
        </authorList>
    </citation>
    <scope>NUCLEOTIDE SEQUENCE [LARGE SCALE GENOMIC DNA]</scope>
</reference>
<reference key="5">
    <citation type="journal article" date="2004" name="Genome Res.">
        <title>The status, quality, and expansion of the NIH full-length cDNA project: the Mammalian Gene Collection (MGC).</title>
        <authorList>
            <consortium name="The MGC Project Team"/>
        </authorList>
    </citation>
    <scope>NUCLEOTIDE SEQUENCE [LARGE SCALE MRNA] (ISOFORM 1)</scope>
</reference>
<reference key="6">
    <citation type="journal article" date="1995" name="Hum. Genet.">
        <title>Isolation and chromosomal localization of a human ATP-regulated potassium channel.</title>
        <authorList>
            <person name="Krishnan S.N."/>
            <person name="Desai T."/>
            <person name="Ward D.C."/>
            <person name="Haddad G.G."/>
        </authorList>
    </citation>
    <scope>NUCLEOTIDE SEQUENCE [MRNA] OF 76-177</scope>
    <scope>TISSUE SPECIFICITY</scope>
    <source>
        <tissue>Brain cortex</tissue>
    </source>
</reference>
<reference key="7">
    <citation type="journal article" date="2000" name="J. Biol. Chem.">
        <title>Glycosylation of GIRK1 at Asn119 and ROMK1 at Asn117 has different consequences in potassium channel function.</title>
        <authorList>
            <person name="Pabon A."/>
            <person name="Chan K.W."/>
            <person name="Sui J.L."/>
            <person name="Wu X."/>
            <person name="Logothetis D.E."/>
            <person name="Thornhill W.B."/>
        </authorList>
    </citation>
    <scope>GLYCOSYLATION AT ASN-117</scope>
</reference>
<reference key="8">
    <citation type="journal article" date="2003" name="Biochem. Biophys. Res. Commun.">
        <title>Molecular requirements for the regulation of the renal outer medullary K(+) channel ROMK1 by the serum- and glucocorticoid-inducible kinase SGK1.</title>
        <authorList>
            <person name="Palmada M."/>
            <person name="Embark H.M."/>
            <person name="Yun C."/>
            <person name="Bohmer C."/>
            <person name="Lang F."/>
        </authorList>
    </citation>
    <scope>INTERACTION WITH SGK1 AND SLC9A3R2/NHERF2</scope>
</reference>
<reference key="9">
    <citation type="journal article" date="2003" name="J. Biol. Chem.">
        <title>Cell surface expression of the ROMK (Kir 1.1) channel is regulated by the aldosterone-induced kinase, SGK-1, and protein kinase A.</title>
        <authorList>
            <person name="Yoo D."/>
            <person name="Kim B.Y."/>
            <person name="Campo C."/>
            <person name="Nance L."/>
            <person name="King A."/>
            <person name="Maouyo D."/>
            <person name="Welling P.A."/>
        </authorList>
    </citation>
    <scope>PHOSPHORYLATION AT SER-44 BY SGK1</scope>
    <scope>SUBCELLULAR LOCATION</scope>
</reference>
<reference key="10">
    <citation type="journal article" date="2006" name="J. Physiol. (Lond.)">
        <title>WNK3, a kinase related to genes mutated in hereditary hypertension with hyperkalaemia, regulates the K+ channel ROMK1 (Kir1.1).</title>
        <authorList>
            <person name="Leng Q."/>
            <person name="Kahle K.T."/>
            <person name="Rinehart J."/>
            <person name="MacGregor G.G."/>
            <person name="Wilson F.H."/>
            <person name="Canessa C.M."/>
            <person name="Lifton R.P."/>
            <person name="Hebert S.C."/>
        </authorList>
    </citation>
    <scope>ACTIVITY REGULATION</scope>
    <scope>FUNCTION</scope>
    <scope>TRANSPORTER ACTIVITY</scope>
    <scope>SUBCELLULAR LOCATION</scope>
</reference>
<reference key="11">
    <citation type="journal article" date="1996" name="Nat. Genet.">
        <title>Genetic heterogeneity of Bartter's syndrome revealed by mutations in the K+ channel, ROMK.</title>
        <authorList>
            <person name="Simon D.B."/>
            <person name="Karet F.E."/>
            <person name="Rodriguez-Soriano J."/>
            <person name="Hamdan J.H."/>
            <person name="DiPietro A."/>
            <person name="Trachtman H."/>
            <person name="Sanjad S.A."/>
            <person name="Lifton R.P."/>
        </authorList>
    </citation>
    <scope>VARIANTS BARTS2 VAL-214; ARG-219 AND THR-357</scope>
</reference>
<reference key="12">
    <citation type="journal article" date="1997" name="Hum. Mol. Genet.">
        <title>Mutations in the gene encoding the inwardly-rectifying renal potassium channel, ROMK, cause the antenatal variant of Bartter syndrome: evidence for genetic heterogeneity.</title>
        <authorList>
            <person name="Karolyi L."/>
            <person name="Konrad M."/>
            <person name="Koeckerling A."/>
            <person name="Ziegler A."/>
            <person name="Zimmermann D.K."/>
            <person name="Roth B."/>
            <person name="Wieg C."/>
            <person name="Grzeschik K.-H."/>
            <person name="Koch M.C."/>
            <person name="Seyberth H.W."/>
            <person name="Vargas R."/>
            <person name="Forestier L."/>
            <person name="Jean G."/>
            <person name="Deschaux M."/>
            <person name="Rizzoni G.F."/>
            <person name="Niaudet P."/>
            <person name="Antignac C."/>
            <person name="Feldmann D."/>
            <person name="Lorridon F."/>
            <person name="Cougoureux E."/>
            <person name="Laroze F."/>
            <person name="Alessandri J.-L."/>
            <person name="David L."/>
            <person name="Saunier P."/>
            <person name="Deschenes G."/>
            <person name="Hildebrandt F."/>
            <person name="Vollmer M."/>
            <person name="Proesmans W."/>
            <person name="Brandis M."/>
            <person name="van den Heuvel L.P.W.J."/>
            <person name="Lemmink H.H."/>
            <person name="Nillesen W."/>
            <person name="Monnens L.A.H."/>
            <person name="Knoers N.V.A.M."/>
            <person name="Guay-Woodford L.M."/>
            <person name="Wright C.J."/>
            <person name="Madrigal G."/>
            <person name="Hebert S.C."/>
        </authorList>
    </citation>
    <scope>VARIANTS BARTS2 GLU-72; TYR-74; CYS-99; HIS-108; LEU-110; GLU-122; GLU-167; THR-198 AND GLY-315</scope>
</reference>
<reference key="13">
    <citation type="journal article" date="1998" name="J. Biol. Chem.">
        <title>A hyperprostaglandin E syndrome mutation in Kir1.1 (renal outer medullary potassium) channels reveals a crucial residue for channel function in Kir1.3 channels.</title>
        <authorList>
            <person name="Derst C."/>
            <person name="Wischmeyer E."/>
            <person name="Preisig-Mueller R."/>
            <person name="Spauschus A."/>
            <person name="Konrad M."/>
            <person name="Hensen P."/>
            <person name="Jeck N."/>
            <person name="Seyberth H.W."/>
            <person name="Daut J."/>
            <person name="Karschin A."/>
        </authorList>
    </citation>
    <scope>VARIANT BARTS2 LYS-124</scope>
</reference>
<reference key="14">
    <citation type="journal article" date="2006" name="Science">
        <title>The consensus coding sequences of human breast and colorectal cancers.</title>
        <authorList>
            <person name="Sjoeblom T."/>
            <person name="Jones S."/>
            <person name="Wood L.D."/>
            <person name="Parsons D.W."/>
            <person name="Lin J."/>
            <person name="Barber T.D."/>
            <person name="Mandelker D."/>
            <person name="Leary R.J."/>
            <person name="Ptak J."/>
            <person name="Silliman N."/>
            <person name="Szabo S."/>
            <person name="Buckhaults P."/>
            <person name="Farrell C."/>
            <person name="Meeh P."/>
            <person name="Markowitz S.D."/>
            <person name="Willis J."/>
            <person name="Dawson D."/>
            <person name="Willson J.K.V."/>
            <person name="Gazdar A.F."/>
            <person name="Hartigan J."/>
            <person name="Wu L."/>
            <person name="Liu C."/>
            <person name="Parmigiani G."/>
            <person name="Park B.H."/>
            <person name="Bachman K.E."/>
            <person name="Papadopoulos N."/>
            <person name="Vogelstein B."/>
            <person name="Kinzler K.W."/>
            <person name="Velculescu V.E."/>
        </authorList>
    </citation>
    <scope>VARIANT [LARGE SCALE ANALYSIS] PHE-115</scope>
</reference>
<accession>P48048</accession>
<accession>B2RMR4</accession>
<accession>Q6LD67</accession>
<proteinExistence type="evidence at protein level"/>
<comment type="function">
    <text evidence="9 12">Inward rectifier potassium channels are characterized by a greater tendency to allow potassium to flow into the cell rather than out of it. Their voltage dependence is regulated by the concentration of extracellular potassium; as external potassium is raised, the voltage range of the channel opening shifts to more positive voltages. The inward rectification is mainly due to the blockage of outward current by internal magnesium. This channel is activated by internal ATP and can be blocked by external barium. In the kidney, probably plays a major role in potassium homeostasis.</text>
</comment>
<comment type="catalytic activity">
    <reaction evidence="9 12">
        <text>K(+)(in) = K(+)(out)</text>
        <dbReference type="Rhea" id="RHEA:29463"/>
        <dbReference type="ChEBI" id="CHEBI:29103"/>
    </reaction>
</comment>
<comment type="activity regulation">
    <text evidence="3 9">Inhibited by WNK3 (PubMed:16357011). Activated by phosphatidylinositol 4,5 biphosphate (PtdIns(4,5)P2) (By similarity).</text>
</comment>
<comment type="subunit">
    <text evidence="8">Interacts with SGK1 and SLC9A3R2/NHERF2.</text>
</comment>
<comment type="subcellular location">
    <subcellularLocation>
        <location evidence="7 9">Cell membrane</location>
        <topology evidence="5">Multi-pass membrane protein</topology>
    </subcellularLocation>
    <text evidence="7">Phosphorylation at Ser-44 by SGK1 is necessary for its expression at the cell membrane.</text>
</comment>
<comment type="alternative products">
    <event type="alternative splicing"/>
    <isoform>
        <id>P48048-1</id>
        <name>1</name>
        <name>ROM-K1</name>
        <sequence type="displayed"/>
    </isoform>
    <isoform>
        <id>P48048-2</id>
        <name>2</name>
        <name>2-4-5</name>
        <name>ROM-K2</name>
        <name>ROM-K4</name>
        <name>ROM-K5</name>
        <name>ROM-K6</name>
        <sequence type="described" ref="VSP_002797"/>
    </isoform>
    <isoform>
        <id>P48048-3</id>
        <name>3</name>
        <name>ROM-K3</name>
        <sequence type="described" ref="VSP_002798"/>
    </isoform>
</comment>
<comment type="tissue specificity">
    <text evidence="11">In the kidney and pancreatic islets. Lower levels in skeletal muscle, pancreas, spleen, brain, heart and liver.</text>
</comment>
<comment type="PTM">
    <text evidence="7">Phosphorylation at Ser-44 by SGK1 is necessary for its expression at the cell membrane.</text>
</comment>
<comment type="disease" evidence="13 14 15">
    <disease id="DI-00174">
        <name>Bartter syndrome 2, antenatal</name>
        <acronym>BARTS2</acronym>
        <description>A form of Bartter syndrome, an autosomal recessive disorder characterized by impaired salt reabsorption in the thick ascending loop of Henle with pronounced salt wasting, hypokalemic metabolic alkalosis, and varying degrees of hypercalciuria. BARTS2 is a life-threatening condition beginning in utero, with marked fetal polyuria that leads to polyhydramnios and premature delivery. Another hallmark is a marked hypercalciuria and, as a secondary consequence, the development of nephrocalcinosis and osteopenia.</description>
        <dbReference type="MIM" id="241200"/>
    </disease>
    <text>The disease is caused by variants affecting the gene represented in this entry.</text>
</comment>
<comment type="similarity">
    <text evidence="16">Belongs to the inward rectifier-type potassium channel (TC 1.A.2.1) family. KCNJ1 subfamily.</text>
</comment>
<name>KCNJ1_HUMAN</name>
<protein>
    <recommendedName>
        <fullName>ATP-sensitive inward rectifier potassium channel 1</fullName>
    </recommendedName>
    <alternativeName>
        <fullName>ATP-regulated potassium channel ROM-K</fullName>
    </alternativeName>
    <alternativeName>
        <fullName>Inward rectifier K(+) channel Kir1.1</fullName>
    </alternativeName>
    <alternativeName>
        <fullName>Potassium channel, inwardly rectifying subfamily J member 1</fullName>
    </alternativeName>
</protein>
<gene>
    <name type="primary">KCNJ1</name>
    <name type="synonym">ROMK1</name>
</gene>
<evidence type="ECO:0000250" key="1"/>
<evidence type="ECO:0000250" key="2">
    <source>
        <dbReference type="UniProtKB" id="O00180"/>
    </source>
</evidence>
<evidence type="ECO:0000250" key="3">
    <source>
        <dbReference type="UniProtKB" id="P35560"/>
    </source>
</evidence>
<evidence type="ECO:0000250" key="4">
    <source>
        <dbReference type="UniProtKB" id="Q63472"/>
    </source>
</evidence>
<evidence type="ECO:0000255" key="5"/>
<evidence type="ECO:0000269" key="6">
    <source>
    </source>
</evidence>
<evidence type="ECO:0000269" key="7">
    <source>
    </source>
</evidence>
<evidence type="ECO:0000269" key="8">
    <source>
    </source>
</evidence>
<evidence type="ECO:0000269" key="9">
    <source>
    </source>
</evidence>
<evidence type="ECO:0000269" key="10">
    <source>
    </source>
</evidence>
<evidence type="ECO:0000269" key="11">
    <source>
    </source>
</evidence>
<evidence type="ECO:0000269" key="12">
    <source>
    </source>
</evidence>
<evidence type="ECO:0000269" key="13">
    <source>
    </source>
</evidence>
<evidence type="ECO:0000269" key="14">
    <source>
    </source>
</evidence>
<evidence type="ECO:0000269" key="15">
    <source>
    </source>
</evidence>
<evidence type="ECO:0000305" key="16"/>
<organism>
    <name type="scientific">Homo sapiens</name>
    <name type="common">Human</name>
    <dbReference type="NCBI Taxonomy" id="9606"/>
    <lineage>
        <taxon>Eukaryota</taxon>
        <taxon>Metazoa</taxon>
        <taxon>Chordata</taxon>
        <taxon>Craniata</taxon>
        <taxon>Vertebrata</taxon>
        <taxon>Euteleostomi</taxon>
        <taxon>Mammalia</taxon>
        <taxon>Eutheria</taxon>
        <taxon>Euarchontoglires</taxon>
        <taxon>Primates</taxon>
        <taxon>Haplorrhini</taxon>
        <taxon>Catarrhini</taxon>
        <taxon>Hominidae</taxon>
        <taxon>Homo</taxon>
    </lineage>
</organism>
<dbReference type="EMBL" id="U12541">
    <property type="protein sequence ID" value="AAA61712.1"/>
    <property type="molecule type" value="mRNA"/>
</dbReference>
<dbReference type="EMBL" id="U12542">
    <property type="protein sequence ID" value="AAA61713.1"/>
    <property type="molecule type" value="mRNA"/>
</dbReference>
<dbReference type="EMBL" id="U12543">
    <property type="protein sequence ID" value="AAA61714.1"/>
    <property type="molecule type" value="mRNA"/>
</dbReference>
<dbReference type="EMBL" id="U12544">
    <property type="protein sequence ID" value="AAA61715.1"/>
    <property type="molecule type" value="mRNA"/>
</dbReference>
<dbReference type="EMBL" id="U12545">
    <property type="protein sequence ID" value="AAA61716.1"/>
    <property type="molecule type" value="mRNA"/>
</dbReference>
<dbReference type="EMBL" id="U03884">
    <property type="protein sequence ID" value="AAA20594.1"/>
    <property type="molecule type" value="mRNA"/>
</dbReference>
<dbReference type="EMBL" id="U65406">
    <property type="protein sequence ID" value="AAC51220.1"/>
    <property type="molecule type" value="Genomic_DNA"/>
</dbReference>
<dbReference type="EMBL" id="U65406">
    <property type="protein sequence ID" value="AAC51221.1"/>
    <property type="molecule type" value="Genomic_DNA"/>
</dbReference>
<dbReference type="EMBL" id="U65406">
    <property type="protein sequence ID" value="AAC51222.1"/>
    <property type="molecule type" value="Genomic_DNA"/>
</dbReference>
<dbReference type="EMBL" id="CH471065">
    <property type="protein sequence ID" value="EAW67724.1"/>
    <property type="molecule type" value="Genomic_DNA"/>
</dbReference>
<dbReference type="EMBL" id="BC074752">
    <property type="protein sequence ID" value="AAH74752.1"/>
    <property type="molecule type" value="mRNA"/>
</dbReference>
<dbReference type="EMBL" id="BC136360">
    <property type="protein sequence ID" value="AAI36361.1"/>
    <property type="molecule type" value="mRNA"/>
</dbReference>
<dbReference type="EMBL" id="BC136361">
    <property type="protein sequence ID" value="AAI36362.1"/>
    <property type="molecule type" value="mRNA"/>
</dbReference>
<dbReference type="EMBL" id="S78737">
    <property type="protein sequence ID" value="AAB35012.1"/>
    <property type="molecule type" value="mRNA"/>
</dbReference>
<dbReference type="CCDS" id="CCDS8476.1">
    <molecule id="P48048-1"/>
</dbReference>
<dbReference type="CCDS" id="CCDS8477.1">
    <molecule id="P48048-2"/>
</dbReference>
<dbReference type="PIR" id="A55119">
    <property type="entry name" value="A55119"/>
</dbReference>
<dbReference type="RefSeq" id="NP_000211.1">
    <molecule id="P48048-1"/>
    <property type="nucleotide sequence ID" value="NM_000220.6"/>
</dbReference>
<dbReference type="RefSeq" id="NP_722448.1">
    <molecule id="P48048-2"/>
    <property type="nucleotide sequence ID" value="NM_153764.3"/>
</dbReference>
<dbReference type="RefSeq" id="NP_722449.3">
    <molecule id="P48048-3"/>
    <property type="nucleotide sequence ID" value="NM_153765.3"/>
</dbReference>
<dbReference type="RefSeq" id="NP_722450.1">
    <molecule id="P48048-2"/>
    <property type="nucleotide sequence ID" value="NM_153766.3"/>
</dbReference>
<dbReference type="RefSeq" id="NP_722451.1">
    <molecule id="P48048-2"/>
    <property type="nucleotide sequence ID" value="NM_153767.4"/>
</dbReference>
<dbReference type="SMR" id="P48048"/>
<dbReference type="BioGRID" id="109960">
    <property type="interactions" value="4"/>
</dbReference>
<dbReference type="ELM" id="P48048"/>
<dbReference type="FunCoup" id="P48048">
    <property type="interactions" value="150"/>
</dbReference>
<dbReference type="STRING" id="9606.ENSP00000376432"/>
<dbReference type="BindingDB" id="P48048"/>
<dbReference type="ChEMBL" id="CHEMBL1293292"/>
<dbReference type="DrugBank" id="DB00414">
    <property type="generic name" value="Acetohexamide"/>
</dbReference>
<dbReference type="DrugBank" id="DB08838">
    <property type="generic name" value="Agmatine"/>
</dbReference>
<dbReference type="DrugBank" id="DB00217">
    <property type="generic name" value="Bethanidine"/>
</dbReference>
<dbReference type="DrugBank" id="DB11148">
    <property type="generic name" value="Butamben"/>
</dbReference>
<dbReference type="DrugBank" id="DB00222">
    <property type="generic name" value="Glimepiride"/>
</dbReference>
<dbReference type="DrugBank" id="DB01382">
    <property type="generic name" value="Glymidine"/>
</dbReference>
<dbReference type="DrugBank" id="DB00350">
    <property type="generic name" value="Minoxidil"/>
</dbReference>
<dbReference type="DrugBank" id="DB00867">
    <property type="generic name" value="Ritodrine"/>
</dbReference>
<dbReference type="DrugBank" id="DB01124">
    <property type="generic name" value="Tolbutamide"/>
</dbReference>
<dbReference type="DrugBank" id="DB01392">
    <property type="generic name" value="Yohimbine"/>
</dbReference>
<dbReference type="DrugCentral" id="P48048"/>
<dbReference type="GuidetoPHARMACOLOGY" id="429"/>
<dbReference type="TCDB" id="1.A.2.1.1">
    <property type="family name" value="the inward rectifier k(+) channel (irk-c) family"/>
</dbReference>
<dbReference type="CarbonylDB" id="P48048"/>
<dbReference type="GlyCosmos" id="P48048">
    <property type="glycosylation" value="1 site, No reported glycans"/>
</dbReference>
<dbReference type="GlyGen" id="P48048">
    <property type="glycosylation" value="4 sites"/>
</dbReference>
<dbReference type="iPTMnet" id="P48048"/>
<dbReference type="PhosphoSitePlus" id="P48048"/>
<dbReference type="BioMuta" id="KCNJ1"/>
<dbReference type="DMDM" id="1352479"/>
<dbReference type="jPOST" id="P48048"/>
<dbReference type="MassIVE" id="P48048"/>
<dbReference type="PaxDb" id="9606-ENSP00000376432"/>
<dbReference type="PeptideAtlas" id="P48048"/>
<dbReference type="ProteomicsDB" id="55838">
    <molecule id="P48048-1"/>
</dbReference>
<dbReference type="ProteomicsDB" id="55839">
    <molecule id="P48048-2"/>
</dbReference>
<dbReference type="ProteomicsDB" id="55840">
    <molecule id="P48048-3"/>
</dbReference>
<dbReference type="Antibodypedia" id="33020">
    <property type="antibodies" value="284 antibodies from 30 providers"/>
</dbReference>
<dbReference type="DNASU" id="3758"/>
<dbReference type="Ensembl" id="ENST00000324036.7">
    <molecule id="P48048-2"/>
    <property type="protein sequence ID" value="ENSP00000316233.3"/>
    <property type="gene ID" value="ENSG00000151704.16"/>
</dbReference>
<dbReference type="Ensembl" id="ENST00000392664.2">
    <molecule id="P48048-1"/>
    <property type="protein sequence ID" value="ENSP00000376432.2"/>
    <property type="gene ID" value="ENSG00000151704.16"/>
</dbReference>
<dbReference type="Ensembl" id="ENST00000392665.6">
    <molecule id="P48048-2"/>
    <property type="protein sequence ID" value="ENSP00000376433.2"/>
    <property type="gene ID" value="ENSG00000151704.16"/>
</dbReference>
<dbReference type="Ensembl" id="ENST00000392666.6">
    <molecule id="P48048-2"/>
    <property type="protein sequence ID" value="ENSP00000376434.1"/>
    <property type="gene ID" value="ENSG00000151704.16"/>
</dbReference>
<dbReference type="Ensembl" id="ENST00000440599.6">
    <molecule id="P48048-2"/>
    <property type="protein sequence ID" value="ENSP00000406320.2"/>
    <property type="gene ID" value="ENSG00000151704.16"/>
</dbReference>
<dbReference type="GeneID" id="3758"/>
<dbReference type="KEGG" id="hsa:3758"/>
<dbReference type="MANE-Select" id="ENST00000392666.6">
    <molecule id="P48048-2"/>
    <property type="protein sequence ID" value="ENSP00000376434.1"/>
    <property type="RefSeq nucleotide sequence ID" value="NM_153766.3"/>
    <property type="RefSeq protein sequence ID" value="NP_722450.1"/>
</dbReference>
<dbReference type="UCSC" id="uc001qeo.3">
    <molecule id="P48048-1"/>
    <property type="organism name" value="human"/>
</dbReference>
<dbReference type="AGR" id="HGNC:6255"/>
<dbReference type="CTD" id="3758"/>
<dbReference type="DisGeNET" id="3758"/>
<dbReference type="GeneCards" id="KCNJ1"/>
<dbReference type="HGNC" id="HGNC:6255">
    <property type="gene designation" value="KCNJ1"/>
</dbReference>
<dbReference type="HPA" id="ENSG00000151704">
    <property type="expression patterns" value="Tissue enriched (kidney)"/>
</dbReference>
<dbReference type="MalaCards" id="KCNJ1"/>
<dbReference type="MIM" id="241200">
    <property type="type" value="phenotype"/>
</dbReference>
<dbReference type="MIM" id="600359">
    <property type="type" value="gene"/>
</dbReference>
<dbReference type="neXtProt" id="NX_P48048"/>
<dbReference type="OpenTargets" id="ENSG00000151704"/>
<dbReference type="Orphanet" id="620220">
    <property type="disease" value="Bartter syndrome type 2"/>
</dbReference>
<dbReference type="PharmGKB" id="PA213"/>
<dbReference type="VEuPathDB" id="HostDB:ENSG00000151704"/>
<dbReference type="eggNOG" id="KOG3827">
    <property type="taxonomic scope" value="Eukaryota"/>
</dbReference>
<dbReference type="GeneTree" id="ENSGT00990000203615"/>
<dbReference type="HOGENOM" id="CLU_022738_3_0_1"/>
<dbReference type="InParanoid" id="P48048"/>
<dbReference type="PAN-GO" id="P48048">
    <property type="GO annotations" value="4 GO annotations based on evolutionary models"/>
</dbReference>
<dbReference type="PhylomeDB" id="P48048"/>
<dbReference type="TreeFam" id="TF313676"/>
<dbReference type="PathwayCommons" id="P48048"/>
<dbReference type="Reactome" id="R-HSA-1296067">
    <property type="pathway name" value="Potassium transport channels"/>
</dbReference>
<dbReference type="SignaLink" id="P48048"/>
<dbReference type="SIGNOR" id="P48048"/>
<dbReference type="BioGRID-ORCS" id="3758">
    <property type="hits" value="13 hits in 1161 CRISPR screens"/>
</dbReference>
<dbReference type="GeneWiki" id="ROMK"/>
<dbReference type="GenomeRNAi" id="3758"/>
<dbReference type="Pharos" id="P48048">
    <property type="development level" value="Tchem"/>
</dbReference>
<dbReference type="PRO" id="PR:P48048"/>
<dbReference type="Proteomes" id="UP000005640">
    <property type="component" value="Chromosome 11"/>
</dbReference>
<dbReference type="RNAct" id="P48048">
    <property type="molecule type" value="protein"/>
</dbReference>
<dbReference type="Bgee" id="ENSG00000151704">
    <property type="expression patterns" value="Expressed in renal medulla and 94 other cell types or tissues"/>
</dbReference>
<dbReference type="ExpressionAtlas" id="P48048">
    <property type="expression patterns" value="baseline and differential"/>
</dbReference>
<dbReference type="GO" id="GO:0034702">
    <property type="term" value="C:monoatomic ion channel complex"/>
    <property type="evidence" value="ECO:0007669"/>
    <property type="project" value="UniProtKB-KW"/>
</dbReference>
<dbReference type="GO" id="GO:0005886">
    <property type="term" value="C:plasma membrane"/>
    <property type="evidence" value="ECO:0000314"/>
    <property type="project" value="UniProtKB"/>
</dbReference>
<dbReference type="GO" id="GO:0005524">
    <property type="term" value="F:ATP binding"/>
    <property type="evidence" value="ECO:0000250"/>
    <property type="project" value="ARUK-UCL"/>
</dbReference>
<dbReference type="GO" id="GO:0015272">
    <property type="term" value="F:ATP-activated inward rectifier potassium channel activity"/>
    <property type="evidence" value="ECO:0000318"/>
    <property type="project" value="GO_Central"/>
</dbReference>
<dbReference type="GO" id="GO:0005242">
    <property type="term" value="F:inward rectifier potassium channel activity"/>
    <property type="evidence" value="ECO:0000314"/>
    <property type="project" value="UniProtKB"/>
</dbReference>
<dbReference type="GO" id="GO:0005546">
    <property type="term" value="F:phosphatidylinositol-4,5-bisphosphate binding"/>
    <property type="evidence" value="ECO:0000314"/>
    <property type="project" value="BHF-UCL"/>
</dbReference>
<dbReference type="GO" id="GO:0005267">
    <property type="term" value="F:potassium channel activity"/>
    <property type="evidence" value="ECO:0000314"/>
    <property type="project" value="UniProtKB"/>
</dbReference>
<dbReference type="GO" id="GO:0072359">
    <property type="term" value="P:circulatory system development"/>
    <property type="evidence" value="ECO:0007669"/>
    <property type="project" value="Ensembl"/>
</dbReference>
<dbReference type="GO" id="GO:0010467">
    <property type="term" value="P:gene expression"/>
    <property type="evidence" value="ECO:0007669"/>
    <property type="project" value="Ensembl"/>
</dbReference>
<dbReference type="GO" id="GO:0001822">
    <property type="term" value="P:kidney development"/>
    <property type="evidence" value="ECO:0007669"/>
    <property type="project" value="Ensembl"/>
</dbReference>
<dbReference type="GO" id="GO:0009791">
    <property type="term" value="P:post-embryonic development"/>
    <property type="evidence" value="ECO:0007669"/>
    <property type="project" value="Ensembl"/>
</dbReference>
<dbReference type="GO" id="GO:1990573">
    <property type="term" value="P:potassium ion import across plasma membrane"/>
    <property type="evidence" value="ECO:0000250"/>
    <property type="project" value="UniProtKB"/>
</dbReference>
<dbReference type="GO" id="GO:0034765">
    <property type="term" value="P:regulation of monoatomic ion transmembrane transport"/>
    <property type="evidence" value="ECO:0000318"/>
    <property type="project" value="GO_Central"/>
</dbReference>
<dbReference type="GO" id="GO:0070294">
    <property type="term" value="P:renal sodium ion absorption"/>
    <property type="evidence" value="ECO:0007669"/>
    <property type="project" value="Ensembl"/>
</dbReference>
<dbReference type="GO" id="GO:0001894">
    <property type="term" value="P:tissue homeostasis"/>
    <property type="evidence" value="ECO:0007669"/>
    <property type="project" value="Ensembl"/>
</dbReference>
<dbReference type="FunFam" id="1.10.287.70:FF:000036">
    <property type="entry name" value="ATP-sensitive inward rectifier potassium channel 1"/>
    <property type="match status" value="1"/>
</dbReference>
<dbReference type="FunFam" id="2.60.40.1400:FF:000002">
    <property type="entry name" value="ATP-sensitive inward rectifier potassium channel 1"/>
    <property type="match status" value="1"/>
</dbReference>
<dbReference type="Gene3D" id="1.10.287.70">
    <property type="match status" value="1"/>
</dbReference>
<dbReference type="Gene3D" id="2.60.40.1400">
    <property type="entry name" value="G protein-activated inward rectifier potassium channel 1"/>
    <property type="match status" value="1"/>
</dbReference>
<dbReference type="InterPro" id="IPR014756">
    <property type="entry name" value="Ig_E-set"/>
</dbReference>
<dbReference type="InterPro" id="IPR041647">
    <property type="entry name" value="IRK_C"/>
</dbReference>
<dbReference type="InterPro" id="IPR016449">
    <property type="entry name" value="K_chnl_inward-rec_Kir"/>
</dbReference>
<dbReference type="InterPro" id="IPR003268">
    <property type="entry name" value="K_chnl_inward-rec_Kir1.1"/>
</dbReference>
<dbReference type="InterPro" id="IPR013518">
    <property type="entry name" value="K_chnl_inward-rec_Kir_cyto"/>
</dbReference>
<dbReference type="InterPro" id="IPR040445">
    <property type="entry name" value="Kir_TM"/>
</dbReference>
<dbReference type="PANTHER" id="PTHR11767:SF6">
    <property type="entry name" value="ATP-SENSITIVE INWARD RECTIFIER POTASSIUM CHANNEL 1"/>
    <property type="match status" value="1"/>
</dbReference>
<dbReference type="PANTHER" id="PTHR11767">
    <property type="entry name" value="INWARD RECTIFIER POTASSIUM CHANNEL"/>
    <property type="match status" value="1"/>
</dbReference>
<dbReference type="Pfam" id="PF01007">
    <property type="entry name" value="IRK"/>
    <property type="match status" value="1"/>
</dbReference>
<dbReference type="Pfam" id="PF17655">
    <property type="entry name" value="IRK_C"/>
    <property type="match status" value="1"/>
</dbReference>
<dbReference type="PIRSF" id="PIRSF005465">
    <property type="entry name" value="GIRK_kir"/>
    <property type="match status" value="1"/>
</dbReference>
<dbReference type="PRINTS" id="PR01321">
    <property type="entry name" value="KIR11CHANNEL"/>
</dbReference>
<dbReference type="PRINTS" id="PR01320">
    <property type="entry name" value="KIRCHANNEL"/>
</dbReference>
<dbReference type="SUPFAM" id="SSF81296">
    <property type="entry name" value="E set domains"/>
    <property type="match status" value="1"/>
</dbReference>
<dbReference type="SUPFAM" id="SSF81324">
    <property type="entry name" value="Voltage-gated potassium channels"/>
    <property type="match status" value="1"/>
</dbReference>
<feature type="chain" id="PRO_0000154917" description="ATP-sensitive inward rectifier potassium channel 1">
    <location>
        <begin position="1"/>
        <end position="391"/>
    </location>
</feature>
<feature type="topological domain" description="Cytoplasmic" evidence="2">
    <location>
        <begin position="1"/>
        <end position="77"/>
    </location>
</feature>
<feature type="transmembrane region" description="Helical; Name=M1" evidence="1">
    <location>
        <begin position="78"/>
        <end position="102"/>
    </location>
</feature>
<feature type="topological domain" description="Extracellular" evidence="2">
    <location>
        <begin position="103"/>
        <end position="127"/>
    </location>
</feature>
<feature type="intramembrane region" description="Helical; Pore-forming; Name=H5" evidence="1">
    <location>
        <begin position="128"/>
        <end position="139"/>
    </location>
</feature>
<feature type="intramembrane region" description="Pore-forming" evidence="1">
    <location>
        <begin position="140"/>
        <end position="146"/>
    </location>
</feature>
<feature type="topological domain" description="Extracellular" evidence="2">
    <location>
        <begin position="147"/>
        <end position="155"/>
    </location>
</feature>
<feature type="transmembrane region" description="Helical; Name=M2" evidence="1">
    <location>
        <begin position="156"/>
        <end position="177"/>
    </location>
</feature>
<feature type="topological domain" description="Cytoplasmic" evidence="2">
    <location>
        <begin position="178"/>
        <end position="391"/>
    </location>
</feature>
<feature type="region of interest" description="Polyphosphoinositide (PIP2)-binding" evidence="3">
    <location>
        <begin position="180"/>
        <end position="207"/>
    </location>
</feature>
<feature type="short sequence motif" description="Selectivity filter" evidence="4">
    <location>
        <begin position="141"/>
        <end position="146"/>
    </location>
</feature>
<feature type="binding site" evidence="5">
    <location>
        <begin position="223"/>
        <end position="230"/>
    </location>
    <ligand>
        <name>ATP</name>
        <dbReference type="ChEBI" id="CHEBI:30616"/>
    </ligand>
</feature>
<feature type="site" description="Role in the control of polyamine-mediated channel gating and in the blocking by intracellular magnesium" evidence="1">
    <location>
        <position position="171"/>
    </location>
</feature>
<feature type="modified residue" description="Phosphoserine; by SGK1" evidence="7">
    <location>
        <position position="44"/>
    </location>
</feature>
<feature type="glycosylation site" description="N-linked (GlcNAc...) asparagine" evidence="6">
    <location>
        <position position="117"/>
    </location>
</feature>
<feature type="splice variant" id="VSP_002797" description="In isoform 2." evidence="16">
    <location>
        <begin position="1"/>
        <end position="19"/>
    </location>
</feature>
<feature type="splice variant" id="VSP_002798" description="In isoform 3." evidence="16">
    <original>MNASSRNVFDTL</original>
    <variation>MPTVYLCSEQ</variation>
    <location>
        <begin position="1"/>
        <end position="12"/>
    </location>
</feature>
<feature type="sequence variant" id="VAR_049668" description="In dbSNP:rs34191956.">
    <original>R</original>
    <variation>W</variation>
    <location>
        <position position="6"/>
    </location>
</feature>
<feature type="sequence variant" id="VAR_001548" description="In BARTS2." evidence="14">
    <original>V</original>
    <variation>E</variation>
    <location>
        <position position="72"/>
    </location>
</feature>
<feature type="sequence variant" id="VAR_001549" description="In BARTS2." evidence="14">
    <original>D</original>
    <variation>Y</variation>
    <location>
        <position position="74"/>
    </location>
</feature>
<feature type="sequence variant" id="VAR_001550" description="In BARTS2; dbSNP:rs1213764655." evidence="14">
    <original>W</original>
    <variation>C</variation>
    <location>
        <position position="99"/>
    </location>
</feature>
<feature type="sequence variant" id="VAR_001551" description="In BARTS2; dbSNP:rs104894250." evidence="14">
    <original>D</original>
    <variation>H</variation>
    <location>
        <position position="108"/>
    </location>
</feature>
<feature type="sequence variant" id="VAR_001552" description="In BARTS2; dbSNP:rs373745258." evidence="14">
    <original>P</original>
    <variation>L</variation>
    <location>
        <position position="110"/>
    </location>
</feature>
<feature type="sequence variant" id="VAR_036426" description="In a breast cancer sample; somatic mutation." evidence="10">
    <original>S</original>
    <variation>F</variation>
    <location>
        <position position="115"/>
    </location>
</feature>
<feature type="sequence variant" id="VAR_001553" description="In BARTS2; dbSNP:rs766131330." evidence="14">
    <original>V</original>
    <variation>E</variation>
    <location>
        <position position="122"/>
    </location>
</feature>
<feature type="sequence variant" id="VAR_019724" description="In BARTS2; dbSNP:rs104894251." evidence="15">
    <original>N</original>
    <variation>K</variation>
    <location>
        <position position="124"/>
    </location>
</feature>
<feature type="sequence variant" id="VAR_001554" description="In BARTS2; dbSNP:rs104894254." evidence="14">
    <original>G</original>
    <variation>E</variation>
    <location>
        <position position="167"/>
    </location>
</feature>
<feature type="sequence variant" id="VAR_001555" description="In BARTS2; dbSNP:rs104894253." evidence="14">
    <original>A</original>
    <variation>T</variation>
    <location>
        <position position="198"/>
    </location>
</feature>
<feature type="sequence variant" id="VAR_019725" description="In BARTS2; dbSNP:rs104894246." evidence="13">
    <original>A</original>
    <variation>V</variation>
    <location>
        <position position="214"/>
    </location>
</feature>
<feature type="sequence variant" id="VAR_019726" description="In BARTS2; dbSNP:rs104894245." evidence="13">
    <original>S</original>
    <variation>R</variation>
    <location>
        <position position="219"/>
    </location>
</feature>
<feature type="sequence variant" id="VAR_001556" description="In BARTS2; dbSNP:rs753949204." evidence="14">
    <original>V</original>
    <variation>G</variation>
    <location>
        <position position="315"/>
    </location>
</feature>
<feature type="sequence variant" id="VAR_019727" description="In BARTS2; dbSNP:rs59172778." evidence="13">
    <original>M</original>
    <variation>T</variation>
    <location>
        <position position="357"/>
    </location>
</feature>